<dbReference type="EMBL" id="AY653733">
    <property type="protein sequence ID" value="AAV51161.1"/>
    <property type="molecule type" value="Genomic_DNA"/>
</dbReference>
<dbReference type="SMR" id="Q5UQZ4"/>
<dbReference type="KEGG" id="vg:9925573"/>
<dbReference type="OrthoDB" id="349at549779"/>
<dbReference type="Proteomes" id="UP000001134">
    <property type="component" value="Genome"/>
</dbReference>
<dbReference type="InterPro" id="IPR022549">
    <property type="entry name" value="DUF3627"/>
</dbReference>
<dbReference type="InterPro" id="IPR018004">
    <property type="entry name" value="KilA/APSES_HTH"/>
</dbReference>
<dbReference type="InterPro" id="IPR017880">
    <property type="entry name" value="KilA_N"/>
</dbReference>
<dbReference type="Pfam" id="PF12299">
    <property type="entry name" value="DUF3627"/>
    <property type="match status" value="1"/>
</dbReference>
<dbReference type="Pfam" id="PF04383">
    <property type="entry name" value="KilA-N"/>
    <property type="match status" value="1"/>
</dbReference>
<dbReference type="SMART" id="SM01252">
    <property type="entry name" value="KilA-N"/>
    <property type="match status" value="1"/>
</dbReference>
<dbReference type="PROSITE" id="PS51301">
    <property type="entry name" value="KILA_N"/>
    <property type="match status" value="1"/>
</dbReference>
<gene>
    <name type="ordered locus">MIMI_R904</name>
</gene>
<protein>
    <recommendedName>
        <fullName>Putative KilA-N domain-containing protein R904</fullName>
    </recommendedName>
</protein>
<proteinExistence type="predicted"/>
<feature type="chain" id="PRO_0000247415" description="Putative KilA-N domain-containing protein R904">
    <location>
        <begin position="1"/>
        <end position="343"/>
    </location>
</feature>
<feature type="domain" description="KilA-N" evidence="2">
    <location>
        <begin position="51"/>
        <end position="157"/>
    </location>
</feature>
<feature type="coiled-coil region" evidence="1">
    <location>
        <begin position="159"/>
        <end position="279"/>
    </location>
</feature>
<name>YR904_MIMIV</name>
<accession>Q5UQZ4</accession>
<sequence>MSKTNKKISSDINHTTKYGSKTPKKVYLSNKVIKRNKNDIRNISYKEINDEFSWGNYLNLKVIIMNDNGYINVTKLIQQANKEKKMGDWNKNKDSKNIVKSACEYTGLTEDKLFIIKTGGNNSTIRGTYAHPIIVAQIAGWASSDFAIKASVIINDYIAKQMFKEHEKIIEEKDKTIKRRDKKIDQLNNKMDDLLKKNDKMSKRIKRLVDTADDLRNQNDDINDKLDVVCNDRVVQSDTNTHRFVIMKNNSDKEDYEYHSIRRLKNSVNNAVKEYKELYPDAEIIMNLGYTPNSICLWNNIKKKLKSKRKIKGTGSDFNLRGDFTEEKLIEEVTKIHNSRFER</sequence>
<organism>
    <name type="scientific">Acanthamoeba polyphaga mimivirus</name>
    <name type="common">APMV</name>
    <dbReference type="NCBI Taxonomy" id="212035"/>
    <lineage>
        <taxon>Viruses</taxon>
        <taxon>Varidnaviria</taxon>
        <taxon>Bamfordvirae</taxon>
        <taxon>Nucleocytoviricota</taxon>
        <taxon>Megaviricetes</taxon>
        <taxon>Imitervirales</taxon>
        <taxon>Mimiviridae</taxon>
        <taxon>Megamimivirinae</taxon>
        <taxon>Mimivirus</taxon>
        <taxon>Mimivirus bradfordmassiliense</taxon>
    </lineage>
</organism>
<keyword id="KW-0175">Coiled coil</keyword>
<keyword id="KW-1185">Reference proteome</keyword>
<reference key="1">
    <citation type="journal article" date="2004" name="Science">
        <title>The 1.2-megabase genome sequence of Mimivirus.</title>
        <authorList>
            <person name="Raoult D."/>
            <person name="Audic S."/>
            <person name="Robert C."/>
            <person name="Abergel C."/>
            <person name="Renesto P."/>
            <person name="Ogata H."/>
            <person name="La Scola B."/>
            <person name="Susan M."/>
            <person name="Claverie J.-M."/>
        </authorList>
    </citation>
    <scope>NUCLEOTIDE SEQUENCE [LARGE SCALE GENOMIC DNA]</scope>
    <source>
        <strain>Rowbotham-Bradford</strain>
    </source>
</reference>
<evidence type="ECO:0000255" key="1"/>
<evidence type="ECO:0000255" key="2">
    <source>
        <dbReference type="PROSITE-ProRule" id="PRU00631"/>
    </source>
</evidence>
<organismHost>
    <name type="scientific">Acanthamoeba polyphaga</name>
    <name type="common">Amoeba</name>
    <dbReference type="NCBI Taxonomy" id="5757"/>
</organismHost>